<gene>
    <name evidence="1" type="primary">queC2</name>
    <name type="ordered locus">RPB_3474</name>
</gene>
<reference key="1">
    <citation type="submission" date="2006-01" db="EMBL/GenBank/DDBJ databases">
        <title>Complete sequence of Rhodopseudomonas palustris HaA2.</title>
        <authorList>
            <consortium name="US DOE Joint Genome Institute"/>
            <person name="Copeland A."/>
            <person name="Lucas S."/>
            <person name="Lapidus A."/>
            <person name="Barry K."/>
            <person name="Detter J.C."/>
            <person name="Glavina T."/>
            <person name="Hammon N."/>
            <person name="Israni S."/>
            <person name="Pitluck S."/>
            <person name="Chain P."/>
            <person name="Malfatti S."/>
            <person name="Shin M."/>
            <person name="Vergez L."/>
            <person name="Schmutz J."/>
            <person name="Larimer F."/>
            <person name="Land M."/>
            <person name="Hauser L."/>
            <person name="Pelletier D.A."/>
            <person name="Kyrpides N."/>
            <person name="Anderson I."/>
            <person name="Oda Y."/>
            <person name="Harwood C.S."/>
            <person name="Richardson P."/>
        </authorList>
    </citation>
    <scope>NUCLEOTIDE SEQUENCE [LARGE SCALE GENOMIC DNA]</scope>
    <source>
        <strain>HaA2</strain>
    </source>
</reference>
<keyword id="KW-0067">ATP-binding</keyword>
<keyword id="KW-0436">Ligase</keyword>
<keyword id="KW-0479">Metal-binding</keyword>
<keyword id="KW-0547">Nucleotide-binding</keyword>
<keyword id="KW-0671">Queuosine biosynthesis</keyword>
<keyword id="KW-1185">Reference proteome</keyword>
<keyword id="KW-0862">Zinc</keyword>
<name>QUEC2_RHOP2</name>
<comment type="function">
    <text evidence="1">Catalyzes the ATP-dependent conversion of 7-carboxy-7-deazaguanine (CDG) to 7-cyano-7-deazaguanine (preQ(0)).</text>
</comment>
<comment type="catalytic activity">
    <reaction evidence="1">
        <text>7-carboxy-7-deazaguanine + NH4(+) + ATP = 7-cyano-7-deazaguanine + ADP + phosphate + H2O + H(+)</text>
        <dbReference type="Rhea" id="RHEA:27982"/>
        <dbReference type="ChEBI" id="CHEBI:15377"/>
        <dbReference type="ChEBI" id="CHEBI:15378"/>
        <dbReference type="ChEBI" id="CHEBI:28938"/>
        <dbReference type="ChEBI" id="CHEBI:30616"/>
        <dbReference type="ChEBI" id="CHEBI:43474"/>
        <dbReference type="ChEBI" id="CHEBI:45075"/>
        <dbReference type="ChEBI" id="CHEBI:61036"/>
        <dbReference type="ChEBI" id="CHEBI:456216"/>
        <dbReference type="EC" id="6.3.4.20"/>
    </reaction>
</comment>
<comment type="cofactor">
    <cofactor evidence="1">
        <name>Zn(2+)</name>
        <dbReference type="ChEBI" id="CHEBI:29105"/>
    </cofactor>
    <text evidence="1">Binds 1 zinc ion per subunit.</text>
</comment>
<comment type="pathway">
    <text evidence="1">Purine metabolism; 7-cyano-7-deazaguanine biosynthesis.</text>
</comment>
<comment type="similarity">
    <text evidence="1">Belongs to the QueC family.</text>
</comment>
<comment type="sequence caution" evidence="2">
    <conflict type="erroneous initiation">
        <sequence resource="EMBL-CDS" id="ABD08170"/>
    </conflict>
</comment>
<evidence type="ECO:0000255" key="1">
    <source>
        <dbReference type="HAMAP-Rule" id="MF_01633"/>
    </source>
</evidence>
<evidence type="ECO:0000305" key="2"/>
<organism>
    <name type="scientific">Rhodopseudomonas palustris (strain HaA2)</name>
    <dbReference type="NCBI Taxonomy" id="316058"/>
    <lineage>
        <taxon>Bacteria</taxon>
        <taxon>Pseudomonadati</taxon>
        <taxon>Pseudomonadota</taxon>
        <taxon>Alphaproteobacteria</taxon>
        <taxon>Hyphomicrobiales</taxon>
        <taxon>Nitrobacteraceae</taxon>
        <taxon>Rhodopseudomonas</taxon>
    </lineage>
</organism>
<accession>Q2IUE0</accession>
<dbReference type="EC" id="6.3.4.20" evidence="1"/>
<dbReference type="EMBL" id="CP000250">
    <property type="protein sequence ID" value="ABD08170.1"/>
    <property type="status" value="ALT_INIT"/>
    <property type="molecule type" value="Genomic_DNA"/>
</dbReference>
<dbReference type="RefSeq" id="WP_198135123.1">
    <property type="nucleotide sequence ID" value="NC_007778.1"/>
</dbReference>
<dbReference type="SMR" id="Q2IUE0"/>
<dbReference type="STRING" id="316058.RPB_3474"/>
<dbReference type="KEGG" id="rpb:RPB_3474"/>
<dbReference type="eggNOG" id="COG0603">
    <property type="taxonomic scope" value="Bacteria"/>
</dbReference>
<dbReference type="HOGENOM" id="CLU_081854_1_1_5"/>
<dbReference type="UniPathway" id="UPA00391"/>
<dbReference type="Proteomes" id="UP000008809">
    <property type="component" value="Chromosome"/>
</dbReference>
<dbReference type="GO" id="GO:0005524">
    <property type="term" value="F:ATP binding"/>
    <property type="evidence" value="ECO:0007669"/>
    <property type="project" value="UniProtKB-UniRule"/>
</dbReference>
<dbReference type="GO" id="GO:0016879">
    <property type="term" value="F:ligase activity, forming carbon-nitrogen bonds"/>
    <property type="evidence" value="ECO:0007669"/>
    <property type="project" value="UniProtKB-UniRule"/>
</dbReference>
<dbReference type="GO" id="GO:0008270">
    <property type="term" value="F:zinc ion binding"/>
    <property type="evidence" value="ECO:0007669"/>
    <property type="project" value="UniProtKB-UniRule"/>
</dbReference>
<dbReference type="GO" id="GO:0008616">
    <property type="term" value="P:queuosine biosynthetic process"/>
    <property type="evidence" value="ECO:0007669"/>
    <property type="project" value="UniProtKB-UniRule"/>
</dbReference>
<dbReference type="CDD" id="cd01995">
    <property type="entry name" value="QueC-like"/>
    <property type="match status" value="1"/>
</dbReference>
<dbReference type="Gene3D" id="3.40.50.620">
    <property type="entry name" value="HUPs"/>
    <property type="match status" value="1"/>
</dbReference>
<dbReference type="HAMAP" id="MF_01633">
    <property type="entry name" value="QueC"/>
    <property type="match status" value="1"/>
</dbReference>
<dbReference type="InterPro" id="IPR018317">
    <property type="entry name" value="QueC"/>
</dbReference>
<dbReference type="InterPro" id="IPR014729">
    <property type="entry name" value="Rossmann-like_a/b/a_fold"/>
</dbReference>
<dbReference type="NCBIfam" id="TIGR00364">
    <property type="entry name" value="7-cyano-7-deazaguanine synthase QueC"/>
    <property type="match status" value="1"/>
</dbReference>
<dbReference type="PANTHER" id="PTHR42914">
    <property type="entry name" value="7-CYANO-7-DEAZAGUANINE SYNTHASE"/>
    <property type="match status" value="1"/>
</dbReference>
<dbReference type="PANTHER" id="PTHR42914:SF1">
    <property type="entry name" value="7-CYANO-7-DEAZAGUANINE SYNTHASE"/>
    <property type="match status" value="1"/>
</dbReference>
<dbReference type="Pfam" id="PF06508">
    <property type="entry name" value="QueC"/>
    <property type="match status" value="1"/>
</dbReference>
<dbReference type="PIRSF" id="PIRSF006293">
    <property type="entry name" value="ExsB"/>
    <property type="match status" value="1"/>
</dbReference>
<dbReference type="SUPFAM" id="SSF52402">
    <property type="entry name" value="Adenine nucleotide alpha hydrolases-like"/>
    <property type="match status" value="1"/>
</dbReference>
<protein>
    <recommendedName>
        <fullName evidence="1">7-cyano-7-deazaguanine synthase 2</fullName>
        <ecNumber evidence="1">6.3.4.20</ecNumber>
    </recommendedName>
    <alternativeName>
        <fullName evidence="1">7-cyano-7-carbaguanine synthase 2</fullName>
    </alternativeName>
    <alternativeName>
        <fullName evidence="1">PreQ(0) synthase 2</fullName>
    </alternativeName>
    <alternativeName>
        <fullName evidence="1">Queuosine biosynthesis protein QueC 2</fullName>
    </alternativeName>
</protein>
<sequence length="210" mass="23096">MARKKVLVLHSGGMDSTTCLLQAKAEGHDVASLGIDYGQRLLVEMMFAEGQCEKYSIPRHVINVNWQKAERQIPLNRSVEEMAHSVSPAFLPGRNIVFLGLGHAHAAGIGADELQIGLNCVDFSGYPDCTTQFYDSYCTMLNIGNPGGPKLVAPLLKMSKPEIARLASTLGLQRNDTWSCYRPQIREGSIVACGECDACKLHEFAWQELK</sequence>
<feature type="chain" id="PRO_0000246909" description="7-cyano-7-deazaguanine synthase 2">
    <location>
        <begin position="1"/>
        <end position="210"/>
    </location>
</feature>
<feature type="binding site" evidence="1">
    <location>
        <begin position="10"/>
        <end position="20"/>
    </location>
    <ligand>
        <name>ATP</name>
        <dbReference type="ChEBI" id="CHEBI:30616"/>
    </ligand>
</feature>
<feature type="binding site" evidence="1">
    <location>
        <position position="180"/>
    </location>
    <ligand>
        <name>Zn(2+)</name>
        <dbReference type="ChEBI" id="CHEBI:29105"/>
    </ligand>
</feature>
<feature type="binding site" evidence="1">
    <location>
        <position position="193"/>
    </location>
    <ligand>
        <name>Zn(2+)</name>
        <dbReference type="ChEBI" id="CHEBI:29105"/>
    </ligand>
</feature>
<feature type="binding site" evidence="1">
    <location>
        <position position="196"/>
    </location>
    <ligand>
        <name>Zn(2+)</name>
        <dbReference type="ChEBI" id="CHEBI:29105"/>
    </ligand>
</feature>
<feature type="binding site" evidence="1">
    <location>
        <position position="199"/>
    </location>
    <ligand>
        <name>Zn(2+)</name>
        <dbReference type="ChEBI" id="CHEBI:29105"/>
    </ligand>
</feature>
<proteinExistence type="inferred from homology"/>